<evidence type="ECO:0000255" key="1">
    <source>
        <dbReference type="HAMAP-Rule" id="MF_00719"/>
    </source>
</evidence>
<dbReference type="EC" id="2.7.8.26" evidence="1"/>
<dbReference type="EMBL" id="CP001185">
    <property type="protein sequence ID" value="ACJ75501.1"/>
    <property type="molecule type" value="Genomic_DNA"/>
</dbReference>
<dbReference type="RefSeq" id="WP_012579952.1">
    <property type="nucleotide sequence ID" value="NC_011653.1"/>
</dbReference>
<dbReference type="STRING" id="484019.THA_1043"/>
<dbReference type="KEGG" id="taf:THA_1043"/>
<dbReference type="eggNOG" id="COG0368">
    <property type="taxonomic scope" value="Bacteria"/>
</dbReference>
<dbReference type="HOGENOM" id="CLU_057426_1_2_0"/>
<dbReference type="OrthoDB" id="9794626at2"/>
<dbReference type="UniPathway" id="UPA00148">
    <property type="reaction ID" value="UER00238"/>
</dbReference>
<dbReference type="Proteomes" id="UP000002453">
    <property type="component" value="Chromosome"/>
</dbReference>
<dbReference type="GO" id="GO:0005886">
    <property type="term" value="C:plasma membrane"/>
    <property type="evidence" value="ECO:0007669"/>
    <property type="project" value="UniProtKB-SubCell"/>
</dbReference>
<dbReference type="GO" id="GO:0051073">
    <property type="term" value="F:adenosylcobinamide-GDP ribazoletransferase activity"/>
    <property type="evidence" value="ECO:0007669"/>
    <property type="project" value="UniProtKB-UniRule"/>
</dbReference>
<dbReference type="GO" id="GO:0008818">
    <property type="term" value="F:cobalamin 5'-phosphate synthase activity"/>
    <property type="evidence" value="ECO:0007669"/>
    <property type="project" value="UniProtKB-UniRule"/>
</dbReference>
<dbReference type="GO" id="GO:0009236">
    <property type="term" value="P:cobalamin biosynthetic process"/>
    <property type="evidence" value="ECO:0007669"/>
    <property type="project" value="UniProtKB-UniRule"/>
</dbReference>
<dbReference type="HAMAP" id="MF_00719">
    <property type="entry name" value="CobS"/>
    <property type="match status" value="1"/>
</dbReference>
<dbReference type="InterPro" id="IPR003805">
    <property type="entry name" value="CobS"/>
</dbReference>
<dbReference type="PANTHER" id="PTHR34148">
    <property type="entry name" value="ADENOSYLCOBINAMIDE-GDP RIBAZOLETRANSFERASE"/>
    <property type="match status" value="1"/>
</dbReference>
<dbReference type="PANTHER" id="PTHR34148:SF1">
    <property type="entry name" value="ADENOSYLCOBINAMIDE-GDP RIBAZOLETRANSFERASE"/>
    <property type="match status" value="1"/>
</dbReference>
<dbReference type="Pfam" id="PF02654">
    <property type="entry name" value="CobS"/>
    <property type="match status" value="1"/>
</dbReference>
<accession>B7IHD7</accession>
<keyword id="KW-0997">Cell inner membrane</keyword>
<keyword id="KW-1003">Cell membrane</keyword>
<keyword id="KW-0169">Cobalamin biosynthesis</keyword>
<keyword id="KW-0460">Magnesium</keyword>
<keyword id="KW-0472">Membrane</keyword>
<keyword id="KW-1185">Reference proteome</keyword>
<keyword id="KW-0808">Transferase</keyword>
<keyword id="KW-0812">Transmembrane</keyword>
<keyword id="KW-1133">Transmembrane helix</keyword>
<comment type="function">
    <text evidence="1">Joins adenosylcobinamide-GDP and alpha-ribazole to generate adenosylcobalamin (Ado-cobalamin). Also synthesizes adenosylcobalamin 5'-phosphate from adenosylcobinamide-GDP and alpha-ribazole 5'-phosphate.</text>
</comment>
<comment type="catalytic activity">
    <reaction evidence="1">
        <text>alpha-ribazole + adenosylcob(III)inamide-GDP = adenosylcob(III)alamin + GMP + H(+)</text>
        <dbReference type="Rhea" id="RHEA:16049"/>
        <dbReference type="ChEBI" id="CHEBI:10329"/>
        <dbReference type="ChEBI" id="CHEBI:15378"/>
        <dbReference type="ChEBI" id="CHEBI:18408"/>
        <dbReference type="ChEBI" id="CHEBI:58115"/>
        <dbReference type="ChEBI" id="CHEBI:60487"/>
        <dbReference type="EC" id="2.7.8.26"/>
    </reaction>
</comment>
<comment type="catalytic activity">
    <reaction evidence="1">
        <text>alpha-ribazole 5'-phosphate + adenosylcob(III)inamide-GDP = adenosylcob(III)alamin 5'-phosphate + GMP + H(+)</text>
        <dbReference type="Rhea" id="RHEA:23560"/>
        <dbReference type="ChEBI" id="CHEBI:15378"/>
        <dbReference type="ChEBI" id="CHEBI:57918"/>
        <dbReference type="ChEBI" id="CHEBI:58115"/>
        <dbReference type="ChEBI" id="CHEBI:60487"/>
        <dbReference type="ChEBI" id="CHEBI:60493"/>
        <dbReference type="EC" id="2.7.8.26"/>
    </reaction>
</comment>
<comment type="cofactor">
    <cofactor evidence="1">
        <name>Mg(2+)</name>
        <dbReference type="ChEBI" id="CHEBI:18420"/>
    </cofactor>
</comment>
<comment type="pathway">
    <text evidence="1">Cofactor biosynthesis; adenosylcobalamin biosynthesis; adenosylcobalamin from cob(II)yrinate a,c-diamide: step 7/7.</text>
</comment>
<comment type="subcellular location">
    <subcellularLocation>
        <location evidence="1">Cell inner membrane</location>
        <topology evidence="1">Multi-pass membrane protein</topology>
    </subcellularLocation>
</comment>
<comment type="similarity">
    <text evidence="1">Belongs to the CobS family.</text>
</comment>
<feature type="chain" id="PRO_1000189622" description="Adenosylcobinamide-GDP ribazoletransferase">
    <location>
        <begin position="1"/>
        <end position="232"/>
    </location>
</feature>
<feature type="transmembrane region" description="Helical" evidence="1">
    <location>
        <begin position="31"/>
        <end position="51"/>
    </location>
</feature>
<feature type="transmembrane region" description="Helical" evidence="1">
    <location>
        <begin position="59"/>
        <end position="79"/>
    </location>
</feature>
<feature type="transmembrane region" description="Helical" evidence="1">
    <location>
        <begin position="102"/>
        <end position="122"/>
    </location>
</feature>
<feature type="transmembrane region" description="Helical" evidence="1">
    <location>
        <begin position="126"/>
        <end position="146"/>
    </location>
</feature>
<feature type="transmembrane region" description="Helical" evidence="1">
    <location>
        <begin position="167"/>
        <end position="187"/>
    </location>
</feature>
<feature type="transmembrane region" description="Helical" evidence="1">
    <location>
        <begin position="209"/>
        <end position="229"/>
    </location>
</feature>
<organism>
    <name type="scientific">Thermosipho africanus (strain TCF52B)</name>
    <dbReference type="NCBI Taxonomy" id="484019"/>
    <lineage>
        <taxon>Bacteria</taxon>
        <taxon>Thermotogati</taxon>
        <taxon>Thermotogota</taxon>
        <taxon>Thermotogae</taxon>
        <taxon>Thermotogales</taxon>
        <taxon>Fervidobacteriaceae</taxon>
        <taxon>Thermosipho</taxon>
    </lineage>
</organism>
<protein>
    <recommendedName>
        <fullName evidence="1">Adenosylcobinamide-GDP ribazoletransferase</fullName>
        <ecNumber evidence="1">2.7.8.26</ecNumber>
    </recommendedName>
    <alternativeName>
        <fullName evidence="1">Cobalamin synthase</fullName>
    </alternativeName>
    <alternativeName>
        <fullName evidence="1">Cobalamin-5'-phosphate synthase</fullName>
    </alternativeName>
</protein>
<gene>
    <name evidence="1" type="primary">cobS</name>
    <name type="ordered locus">THA_1043</name>
</gene>
<sequence>MIKNFLLSLSFISRLPLNINVNDFDRRVKKLPSFFPLVGYIVGSIYYLGALSNNLALKVFFLVLAFYFFDLFHFDGFLDTLDGFLNQSTKEKRLEIMSKGDVGPFAVFFGTLFVVVFWNLYLNANPFYFFISSTFGRYSMVLLMAFSKPAKKEGLGALFFPFEKKNLLISTIFTFFLIIFFKQYIISLTVTLITTYLISKIATSKIGGVTGDVLGGTCLFVNGLILLILEVV</sequence>
<proteinExistence type="inferred from homology"/>
<reference key="1">
    <citation type="journal article" date="2009" name="J. Bacteriol.">
        <title>The genome of Thermosipho africanus TCF52B: lateral genetic connections to the Firmicutes and Archaea.</title>
        <authorList>
            <person name="Nesboe C.L."/>
            <person name="Bapteste E."/>
            <person name="Curtis B."/>
            <person name="Dahle H."/>
            <person name="Lopez P."/>
            <person name="Macleod D."/>
            <person name="Dlutek M."/>
            <person name="Bowman S."/>
            <person name="Zhaxybayeva O."/>
            <person name="Birkeland N.-K."/>
            <person name="Doolittle W.F."/>
        </authorList>
    </citation>
    <scope>NUCLEOTIDE SEQUENCE [LARGE SCALE GENOMIC DNA]</scope>
    <source>
        <strain>TCF52B</strain>
    </source>
</reference>
<name>COBS_THEAB</name>